<name>CYF_TRIEI</name>
<feature type="signal peptide" evidence="1">
    <location>
        <begin position="1"/>
        <end position="40"/>
    </location>
</feature>
<feature type="chain" id="PRO_5000126884" description="Cytochrome f">
    <location>
        <begin position="41"/>
        <end position="325"/>
    </location>
</feature>
<feature type="transmembrane region" description="Helical" evidence="1">
    <location>
        <begin position="291"/>
        <end position="311"/>
    </location>
</feature>
<feature type="binding site" description="axial binding residue" evidence="1">
    <location>
        <position position="41"/>
    </location>
    <ligand>
        <name>heme</name>
        <dbReference type="ChEBI" id="CHEBI:30413"/>
    </ligand>
    <ligandPart>
        <name>Fe</name>
        <dbReference type="ChEBI" id="CHEBI:18248"/>
    </ligandPart>
</feature>
<feature type="binding site" description="covalent" evidence="1">
    <location>
        <position position="62"/>
    </location>
    <ligand>
        <name>heme</name>
        <dbReference type="ChEBI" id="CHEBI:30413"/>
    </ligand>
</feature>
<feature type="binding site" description="covalent" evidence="1">
    <location>
        <position position="65"/>
    </location>
    <ligand>
        <name>heme</name>
        <dbReference type="ChEBI" id="CHEBI:30413"/>
    </ligand>
</feature>
<feature type="binding site" description="axial binding residue" evidence="1">
    <location>
        <position position="66"/>
    </location>
    <ligand>
        <name>heme</name>
        <dbReference type="ChEBI" id="CHEBI:30413"/>
    </ligand>
    <ligandPart>
        <name>Fe</name>
        <dbReference type="ChEBI" id="CHEBI:18248"/>
    </ligandPart>
</feature>
<dbReference type="EMBL" id="CP000393">
    <property type="protein sequence ID" value="ABG51057.1"/>
    <property type="molecule type" value="Genomic_DNA"/>
</dbReference>
<dbReference type="RefSeq" id="WP_011611432.1">
    <property type="nucleotide sequence ID" value="NC_008312.1"/>
</dbReference>
<dbReference type="SMR" id="Q114L7"/>
<dbReference type="STRING" id="203124.Tery_1798"/>
<dbReference type="KEGG" id="ter:Tery_1798"/>
<dbReference type="eggNOG" id="COG0739">
    <property type="taxonomic scope" value="Bacteria"/>
</dbReference>
<dbReference type="HOGENOM" id="CLU_033498_0_0_3"/>
<dbReference type="OrthoDB" id="581091at2"/>
<dbReference type="GO" id="GO:0031676">
    <property type="term" value="C:plasma membrane-derived thylakoid membrane"/>
    <property type="evidence" value="ECO:0007669"/>
    <property type="project" value="UniProtKB-SubCell"/>
</dbReference>
<dbReference type="GO" id="GO:0009055">
    <property type="term" value="F:electron transfer activity"/>
    <property type="evidence" value="ECO:0007669"/>
    <property type="project" value="UniProtKB-UniRule"/>
</dbReference>
<dbReference type="GO" id="GO:0020037">
    <property type="term" value="F:heme binding"/>
    <property type="evidence" value="ECO:0007669"/>
    <property type="project" value="InterPro"/>
</dbReference>
<dbReference type="GO" id="GO:0005506">
    <property type="term" value="F:iron ion binding"/>
    <property type="evidence" value="ECO:0007669"/>
    <property type="project" value="InterPro"/>
</dbReference>
<dbReference type="GO" id="GO:0015979">
    <property type="term" value="P:photosynthesis"/>
    <property type="evidence" value="ECO:0007669"/>
    <property type="project" value="UniProtKB-UniRule"/>
</dbReference>
<dbReference type="FunFam" id="1.20.5.700:FF:000001">
    <property type="entry name" value="Cytochrome f"/>
    <property type="match status" value="1"/>
</dbReference>
<dbReference type="FunFam" id="2.60.40.830:FF:000001">
    <property type="entry name" value="Cytochrome f"/>
    <property type="match status" value="1"/>
</dbReference>
<dbReference type="Gene3D" id="2.40.50.100">
    <property type="match status" value="1"/>
</dbReference>
<dbReference type="Gene3D" id="2.60.40.830">
    <property type="entry name" value="Cytochrome f large domain"/>
    <property type="match status" value="1"/>
</dbReference>
<dbReference type="Gene3D" id="1.20.5.700">
    <property type="entry name" value="Single helix bin"/>
    <property type="match status" value="1"/>
</dbReference>
<dbReference type="HAMAP" id="MF_00610">
    <property type="entry name" value="Cytb6_f_cytF"/>
    <property type="match status" value="1"/>
</dbReference>
<dbReference type="InterPro" id="IPR024058">
    <property type="entry name" value="Cyt-f_TM"/>
</dbReference>
<dbReference type="InterPro" id="IPR002325">
    <property type="entry name" value="Cyt_f"/>
</dbReference>
<dbReference type="InterPro" id="IPR024094">
    <property type="entry name" value="Cyt_f_lg_dom"/>
</dbReference>
<dbReference type="InterPro" id="IPR036826">
    <property type="entry name" value="Cyt_f_lg_dom_sf"/>
</dbReference>
<dbReference type="InterPro" id="IPR011054">
    <property type="entry name" value="Rudment_hybrid_motif"/>
</dbReference>
<dbReference type="NCBIfam" id="NF002736">
    <property type="entry name" value="PRK02693.1"/>
    <property type="match status" value="1"/>
</dbReference>
<dbReference type="PANTHER" id="PTHR33288">
    <property type="match status" value="1"/>
</dbReference>
<dbReference type="PANTHER" id="PTHR33288:SF10">
    <property type="entry name" value="CYTOCHROME F"/>
    <property type="match status" value="1"/>
</dbReference>
<dbReference type="Pfam" id="PF01333">
    <property type="entry name" value="Apocytochr_F_C"/>
    <property type="match status" value="1"/>
</dbReference>
<dbReference type="Pfam" id="PF16639">
    <property type="entry name" value="Apocytochr_F_N"/>
    <property type="match status" value="1"/>
</dbReference>
<dbReference type="PRINTS" id="PR00610">
    <property type="entry name" value="CYTOCHROMEF"/>
</dbReference>
<dbReference type="SUPFAM" id="SSF103431">
    <property type="entry name" value="Cytochrome f subunit of the cytochrome b6f complex, transmembrane anchor"/>
    <property type="match status" value="1"/>
</dbReference>
<dbReference type="SUPFAM" id="SSF49441">
    <property type="entry name" value="Cytochrome f, large domain"/>
    <property type="match status" value="1"/>
</dbReference>
<dbReference type="SUPFAM" id="SSF51246">
    <property type="entry name" value="Rudiment single hybrid motif"/>
    <property type="match status" value="1"/>
</dbReference>
<dbReference type="PROSITE" id="PS51010">
    <property type="entry name" value="CYTF"/>
    <property type="match status" value="1"/>
</dbReference>
<sequence length="325" mass="35313">MSKINLSTMWSSFIKKIAKTILVAIACISLFLTSSPAANAYPFWAQETAPATPREATGRIVCANCHLGAKLTEVEVPQSVLPDTVFKAVVKIPYDTDVQQVLGDGSKGGLNVGAVLMLPEGFKIAPEDRIPQEWQEELADLYFMPYSEEQENVLLFGPMPGDEYQEVVFPILSPDPATDKSIHFGKYAVHAGGNRGRGQVYPAGNKSNNTTYNVSASGKITDITFEEYVGNQITIETPDSETVVDLVPPGPELLVAVGDTVEAGQVITNNPNVGGFGQADTEIVLQDANRVKWLMAFFALVMLAQIMLVLKKKQVEKVQAAEMNF</sequence>
<keyword id="KW-0249">Electron transport</keyword>
<keyword id="KW-0349">Heme</keyword>
<keyword id="KW-0408">Iron</keyword>
<keyword id="KW-0472">Membrane</keyword>
<keyword id="KW-0479">Metal-binding</keyword>
<keyword id="KW-0602">Photosynthesis</keyword>
<keyword id="KW-0732">Signal</keyword>
<keyword id="KW-0793">Thylakoid</keyword>
<keyword id="KW-0812">Transmembrane</keyword>
<keyword id="KW-1133">Transmembrane helix</keyword>
<keyword id="KW-0813">Transport</keyword>
<proteinExistence type="inferred from homology"/>
<reference key="1">
    <citation type="journal article" date="2015" name="Proc. Natl. Acad. Sci. U.S.A.">
        <title>Trichodesmium genome maintains abundant, widespread noncoding DNA in situ, despite oligotrophic lifestyle.</title>
        <authorList>
            <person name="Walworth N."/>
            <person name="Pfreundt U."/>
            <person name="Nelson W.C."/>
            <person name="Mincer T."/>
            <person name="Heidelberg J.F."/>
            <person name="Fu F."/>
            <person name="Waterbury J.B."/>
            <person name="Glavina del Rio T."/>
            <person name="Goodwin L."/>
            <person name="Kyrpides N.C."/>
            <person name="Land M.L."/>
            <person name="Woyke T."/>
            <person name="Hutchins D.A."/>
            <person name="Hess W.R."/>
            <person name="Webb E.A."/>
        </authorList>
    </citation>
    <scope>NUCLEOTIDE SEQUENCE [LARGE SCALE GENOMIC DNA]</scope>
    <source>
        <strain>IMS101</strain>
    </source>
</reference>
<gene>
    <name evidence="1" type="primary">petA</name>
    <name type="ordered locus">Tery_1798</name>
</gene>
<protein>
    <recommendedName>
        <fullName evidence="1">Cytochrome f</fullName>
    </recommendedName>
</protein>
<evidence type="ECO:0000255" key="1">
    <source>
        <dbReference type="HAMAP-Rule" id="MF_00610"/>
    </source>
</evidence>
<organism>
    <name type="scientific">Trichodesmium erythraeum (strain IMS101)</name>
    <dbReference type="NCBI Taxonomy" id="203124"/>
    <lineage>
        <taxon>Bacteria</taxon>
        <taxon>Bacillati</taxon>
        <taxon>Cyanobacteriota</taxon>
        <taxon>Cyanophyceae</taxon>
        <taxon>Oscillatoriophycideae</taxon>
        <taxon>Oscillatoriales</taxon>
        <taxon>Microcoleaceae</taxon>
        <taxon>Trichodesmium</taxon>
    </lineage>
</organism>
<accession>Q114L7</accession>
<comment type="function">
    <text evidence="1">Component of the cytochrome b6-f complex, which mediates electron transfer between photosystem II (PSII) and photosystem I (PSI), cyclic electron flow around PSI, and state transitions.</text>
</comment>
<comment type="cofactor">
    <cofactor evidence="1">
        <name>heme</name>
        <dbReference type="ChEBI" id="CHEBI:30413"/>
    </cofactor>
    <text evidence="1">Binds 1 heme group covalently.</text>
</comment>
<comment type="subunit">
    <text evidence="1">The 4 large subunits of the cytochrome b6-f complex are cytochrome b6, subunit IV (17 kDa polypeptide, PetD), cytochrome f and the Rieske protein, while the 4 small subunits are PetG, PetL, PetM and PetN. The complex functions as a dimer.</text>
</comment>
<comment type="subcellular location">
    <subcellularLocation>
        <location evidence="1">Cellular thylakoid membrane</location>
        <topology evidence="1">Single-pass membrane protein</topology>
    </subcellularLocation>
</comment>
<comment type="similarity">
    <text evidence="1">Belongs to the cytochrome f family.</text>
</comment>